<proteinExistence type="predicted"/>
<comment type="sequence caution" evidence="1">
    <conflict type="erroneous gene model prediction">
        <sequence resource="EMBL-CDS" id="AED94362"/>
    </conflict>
</comment>
<gene>
    <name type="ordered locus">At5g38810</name>
    <name type="ORF">K15E6.2</name>
</gene>
<accession>Q9FMC1</accession>
<accession>F4KBM6</accession>
<dbReference type="EMBL" id="AB009048">
    <property type="protein sequence ID" value="BAB08637.1"/>
    <property type="molecule type" value="Genomic_DNA"/>
</dbReference>
<dbReference type="EMBL" id="CP002688">
    <property type="protein sequence ID" value="AED94362.1"/>
    <property type="status" value="ALT_SEQ"/>
    <property type="molecule type" value="Genomic_DNA"/>
</dbReference>
<dbReference type="EMBL" id="CP002688">
    <property type="protein sequence ID" value="ANM70239.1"/>
    <property type="molecule type" value="Genomic_DNA"/>
</dbReference>
<dbReference type="RefSeq" id="NP_001331868.1">
    <property type="nucleotide sequence ID" value="NM_001344268.1"/>
</dbReference>
<dbReference type="RefSeq" id="NP_198697.1">
    <property type="nucleotide sequence ID" value="NM_123242.1"/>
</dbReference>
<dbReference type="EnsemblPlants" id="AT5G38810.2">
    <property type="protein sequence ID" value="AT5G38810.2"/>
    <property type="gene ID" value="AT5G38810"/>
</dbReference>
<dbReference type="GeneID" id="833872"/>
<dbReference type="Gramene" id="AT5G38810.2">
    <property type="protein sequence ID" value="AT5G38810.2"/>
    <property type="gene ID" value="AT5G38810"/>
</dbReference>
<dbReference type="KEGG" id="ath:AT5G38810"/>
<dbReference type="Araport" id="AT5G38810"/>
<dbReference type="TAIR" id="AT5G38810"/>
<dbReference type="InParanoid" id="Q9FMC1"/>
<dbReference type="OMA" id="WICKETE"/>
<dbReference type="PRO" id="PR:Q9FMC1"/>
<dbReference type="Proteomes" id="UP000006548">
    <property type="component" value="Chromosome 5"/>
</dbReference>
<dbReference type="ExpressionAtlas" id="Q9FMC1">
    <property type="expression patterns" value="baseline"/>
</dbReference>
<dbReference type="Gene3D" id="1.20.1280.50">
    <property type="match status" value="1"/>
</dbReference>
<dbReference type="InterPro" id="IPR013187">
    <property type="entry name" value="F-box-assoc_dom_typ3"/>
</dbReference>
<dbReference type="InterPro" id="IPR017451">
    <property type="entry name" value="F-box-assoc_interact_dom"/>
</dbReference>
<dbReference type="InterPro" id="IPR036047">
    <property type="entry name" value="F-box-like_dom_sf"/>
</dbReference>
<dbReference type="InterPro" id="IPR001810">
    <property type="entry name" value="F-box_dom"/>
</dbReference>
<dbReference type="NCBIfam" id="TIGR01640">
    <property type="entry name" value="F_box_assoc_1"/>
    <property type="match status" value="1"/>
</dbReference>
<dbReference type="PANTHER" id="PTHR31111">
    <property type="entry name" value="BNAA05G37150D PROTEIN-RELATED"/>
    <property type="match status" value="1"/>
</dbReference>
<dbReference type="PANTHER" id="PTHR31111:SF130">
    <property type="entry name" value="F-BOX ASSOCIATED UBIQUITINATION EFFECTOR FAMILY PROTEIN"/>
    <property type="match status" value="1"/>
</dbReference>
<dbReference type="Pfam" id="PF00646">
    <property type="entry name" value="F-box"/>
    <property type="match status" value="1"/>
</dbReference>
<dbReference type="Pfam" id="PF08268">
    <property type="entry name" value="FBA_3"/>
    <property type="match status" value="1"/>
</dbReference>
<dbReference type="SMART" id="SM00256">
    <property type="entry name" value="FBOX"/>
    <property type="match status" value="1"/>
</dbReference>
<dbReference type="SUPFAM" id="SSF81383">
    <property type="entry name" value="F-box domain"/>
    <property type="match status" value="1"/>
</dbReference>
<sequence>MESRKTFDSIPDDLFVEIALRLSSKSIARCRCVSKLWASILYRQDFTELFITKSSARPRLLFAVLKASGLIFYSSPQSQNPSLEVDFHNHMKFHEDMNLYMCSYVSGFDPIGKQHKVLCMNKRLNKEWVHYILTLGTENLKWRKMICPLTHEPYYGRALSINGVLYYFARTSCFLVVSFNVRSEKFKFLDGKDFSNFHREFINYKGKLGVTKLECDAGDGHPRELCVWVLEDVEKQEWSQYIYSLPKIKVNRIRNDNIFAMFLPLTI</sequence>
<keyword id="KW-1185">Reference proteome</keyword>
<reference key="1">
    <citation type="journal article" date="1998" name="DNA Res.">
        <title>Structural analysis of Arabidopsis thaliana chromosome 5. IV. Sequence features of the regions of 1,456,315 bp covered by nineteen physically assigned P1 and TAC clones.</title>
        <authorList>
            <person name="Sato S."/>
            <person name="Kaneko T."/>
            <person name="Kotani H."/>
            <person name="Nakamura Y."/>
            <person name="Asamizu E."/>
            <person name="Miyajima N."/>
            <person name="Tabata S."/>
        </authorList>
    </citation>
    <scope>NUCLEOTIDE SEQUENCE [LARGE SCALE GENOMIC DNA]</scope>
    <source>
        <strain>cv. Columbia</strain>
    </source>
</reference>
<reference key="2">
    <citation type="journal article" date="2017" name="Plant J.">
        <title>Araport11: a complete reannotation of the Arabidopsis thaliana reference genome.</title>
        <authorList>
            <person name="Cheng C.Y."/>
            <person name="Krishnakumar V."/>
            <person name="Chan A.P."/>
            <person name="Thibaud-Nissen F."/>
            <person name="Schobel S."/>
            <person name="Town C.D."/>
        </authorList>
    </citation>
    <scope>GENOME REANNOTATION</scope>
    <source>
        <strain>cv. Columbia</strain>
    </source>
</reference>
<name>FB269_ARATH</name>
<evidence type="ECO:0000305" key="1"/>
<protein>
    <recommendedName>
        <fullName>Putative F-box protein At5g38810</fullName>
    </recommendedName>
</protein>
<feature type="chain" id="PRO_0000283535" description="Putative F-box protein At5g38810">
    <location>
        <begin position="1"/>
        <end position="267"/>
    </location>
</feature>
<feature type="domain" description="F-box">
    <location>
        <begin position="4"/>
        <end position="53"/>
    </location>
</feature>
<organism>
    <name type="scientific">Arabidopsis thaliana</name>
    <name type="common">Mouse-ear cress</name>
    <dbReference type="NCBI Taxonomy" id="3702"/>
    <lineage>
        <taxon>Eukaryota</taxon>
        <taxon>Viridiplantae</taxon>
        <taxon>Streptophyta</taxon>
        <taxon>Embryophyta</taxon>
        <taxon>Tracheophyta</taxon>
        <taxon>Spermatophyta</taxon>
        <taxon>Magnoliopsida</taxon>
        <taxon>eudicotyledons</taxon>
        <taxon>Gunneridae</taxon>
        <taxon>Pentapetalae</taxon>
        <taxon>rosids</taxon>
        <taxon>malvids</taxon>
        <taxon>Brassicales</taxon>
        <taxon>Brassicaceae</taxon>
        <taxon>Camelineae</taxon>
        <taxon>Arabidopsis</taxon>
    </lineage>
</organism>